<reference key="1">
    <citation type="journal article" date="1990" name="FEMS Microbiol. Lett.">
        <title>Opacity factor from group A streptococci is an apoproteinase.</title>
        <authorList>
            <person name="Elkins M.F."/>
            <person name="Earhart C.F."/>
        </authorList>
    </citation>
    <scope>NUCLEOTIDE SEQUENCE [GENOMIC DNA]</scope>
    <source>
        <strain>K12</strain>
    </source>
</reference>
<reference key="2">
    <citation type="journal article" date="1989" name="J. Bacteriol.">
        <title>Nucleotide sequence of Escherichia coli isochorismate synthetase gene entC and evolutionary relationship of isochorismate synthetase and other chorismate-utilizing enzymes.</title>
        <authorList>
            <person name="Ozenberger B.A."/>
            <person name="Brickman T.J."/>
            <person name="McIntosh M.A."/>
        </authorList>
    </citation>
    <scope>NUCLEOTIDE SEQUENCE [GENOMIC DNA]</scope>
    <scope>FUNCTION</scope>
    <source>
        <strain>K12</strain>
    </source>
</reference>
<reference key="3">
    <citation type="submission" date="1997-01" db="EMBL/GenBank/DDBJ databases">
        <title>Sequence of minutes 4-25 of Escherichia coli.</title>
        <authorList>
            <person name="Chung E."/>
            <person name="Allen E."/>
            <person name="Araujo R."/>
            <person name="Aparicio A.M."/>
            <person name="Davis K."/>
            <person name="Duncan M."/>
            <person name="Federspiel N."/>
            <person name="Hyman R."/>
            <person name="Kalman S."/>
            <person name="Komp C."/>
            <person name="Kurdi O."/>
            <person name="Lew H."/>
            <person name="Lin D."/>
            <person name="Namath A."/>
            <person name="Oefner P."/>
            <person name="Roberts D."/>
            <person name="Schramm S."/>
            <person name="Davis R.W."/>
        </authorList>
    </citation>
    <scope>NUCLEOTIDE SEQUENCE [LARGE SCALE GENOMIC DNA]</scope>
    <source>
        <strain>K12 / MG1655 / ATCC 47076</strain>
    </source>
</reference>
<reference key="4">
    <citation type="journal article" date="1997" name="Science">
        <title>The complete genome sequence of Escherichia coli K-12.</title>
        <authorList>
            <person name="Blattner F.R."/>
            <person name="Plunkett G. III"/>
            <person name="Bloch C.A."/>
            <person name="Perna N.T."/>
            <person name="Burland V."/>
            <person name="Riley M."/>
            <person name="Collado-Vides J."/>
            <person name="Glasner J.D."/>
            <person name="Rode C.K."/>
            <person name="Mayhew G.F."/>
            <person name="Gregor J."/>
            <person name="Davis N.W."/>
            <person name="Kirkpatrick H.A."/>
            <person name="Goeden M.A."/>
            <person name="Rose D.J."/>
            <person name="Mau B."/>
            <person name="Shao Y."/>
        </authorList>
    </citation>
    <scope>NUCLEOTIDE SEQUENCE [LARGE SCALE GENOMIC DNA]</scope>
    <source>
        <strain>K12 / MG1655 / ATCC 47076</strain>
    </source>
</reference>
<reference key="5">
    <citation type="journal article" date="2006" name="Mol. Syst. Biol.">
        <title>Highly accurate genome sequences of Escherichia coli K-12 strains MG1655 and W3110.</title>
        <authorList>
            <person name="Hayashi K."/>
            <person name="Morooka N."/>
            <person name="Yamamoto Y."/>
            <person name="Fujita K."/>
            <person name="Isono K."/>
            <person name="Choi S."/>
            <person name="Ohtsubo E."/>
            <person name="Baba T."/>
            <person name="Wanner B.L."/>
            <person name="Mori H."/>
            <person name="Horiuchi T."/>
        </authorList>
    </citation>
    <scope>NUCLEOTIDE SEQUENCE [LARGE SCALE GENOMIC DNA]</scope>
    <source>
        <strain>K12 / W3110 / ATCC 27325 / DSM 5911</strain>
    </source>
</reference>
<reference key="6">
    <citation type="journal article" date="1990" name="J. Mol. Biol.">
        <title>Regulation of divergent transcription from the iron-responsive fepB-entC promoter-operator regions in Escherichia coli.</title>
        <authorList>
            <person name="Brickman T.J."/>
            <person name="Ozenberger B.A."/>
            <person name="McIntosh M.A."/>
        </authorList>
    </citation>
    <scope>NUCLEOTIDE SEQUENCE [GENOMIC DNA] OF 1-33</scope>
</reference>
<reference key="7">
    <citation type="journal article" date="1990" name="Biochemistry">
        <title>Overexpression, purification, and characterization of isochorismate synthase (EntC), the first enzyme involved in the biosynthesis of enterobactin from chorismate.</title>
        <authorList>
            <person name="Liu J."/>
            <person name="Quinn N."/>
            <person name="Berchtold G.A."/>
            <person name="Walsh C.T."/>
        </authorList>
    </citation>
    <scope>PROTEIN SEQUENCE OF 1-12</scope>
    <scope>FUNCTION</scope>
    <scope>CATALYTIC ACTIVITY</scope>
    <scope>BIOPHYSICOCHEMICAL PROPERTIES</scope>
    <scope>SUBUNIT</scope>
</reference>
<reference key="8">
    <citation type="journal article" date="1989" name="J. Bacteriol.">
        <title>Nucleotide sequence and transcriptional organization of the Escherichia coli enterobactin biosynthesis cistrons entB and entA.</title>
        <authorList>
            <person name="Nahlik M.S."/>
            <person name="Brickman T.J."/>
            <person name="Ozenberger B.A."/>
            <person name="McIntosh M.A."/>
        </authorList>
    </citation>
    <scope>INDUCTION</scope>
</reference>
<reference key="9">
    <citation type="journal article" date="1996" name="J. Bacteriol.">
        <title>Anaerobic biosynthesis of enterobactin Escherichia coli: regulation of entC gene expression and evidence against its involvement in menaquinone (vitamin K2) biosynthesis.</title>
        <authorList>
            <person name="Kwon O."/>
            <person name="Hudspeth M.E."/>
            <person name="Meganathan R."/>
        </authorList>
    </citation>
    <scope>FUNCTION</scope>
    <scope>INDUCTION</scope>
</reference>
<reference key="10">
    <citation type="journal article" date="1998" name="Biochim. Biophys. Acta">
        <title>The role of isochorismate hydroxymutase genes entC and menF in enterobactin and menaquinone biosynthesis in Escherichia coli.</title>
        <authorList>
            <person name="Dahm C."/>
            <person name="Muller R."/>
            <person name="Schulte G."/>
            <person name="Schmidt K."/>
            <person name="Leistner E."/>
        </authorList>
    </citation>
    <scope>FUNCTION</scope>
    <scope>DISRUPTION PHENOTYPE</scope>
</reference>
<reference key="11">
    <citation type="journal article" date="2007" name="J. Am. Chem. Soc.">
        <title>Effects of macromolecular crowding on the intrinsic catalytic efficiency and structure of enterobactin-specific isochorismate synthase.</title>
        <authorList>
            <person name="Jiang M."/>
            <person name="Guo Z."/>
        </authorList>
    </citation>
    <scope>FUNCTION</scope>
    <scope>CATALYTIC ACTIVITY</scope>
    <scope>BIOPHYSICOCHEMICAL PROPERTIES</scope>
</reference>
<reference key="12">
    <citation type="journal article" date="2012" name="Microbiology">
        <title>Escherichia coli enterobactin synthesis and uptake mutants are hypersensitive to an antimicrobial peptide that limits the availability of iron in addition to blocking Holliday junction resolution.</title>
        <authorList>
            <person name="Orchard S.S."/>
            <person name="Rostron J.E."/>
            <person name="Segall A.M."/>
        </authorList>
    </citation>
    <scope>DISRUPTION PHENOTYPE</scope>
</reference>
<reference key="13">
    <citation type="journal article" date="2022" name="Biochimie">
        <title>Evidence of an intracellular interaction between the Escherichia coli enzymes EntC and EntB and identification of a potential electrostatic channeling surface.</title>
        <authorList>
            <person name="Ouellette S."/>
            <person name="Pakarian P."/>
            <person name="Bin X."/>
            <person name="Pawelek P.D."/>
        </authorList>
    </citation>
    <scope>INTERACTION WITH ENTB</scope>
</reference>
<reference evidence="13" key="14">
    <citation type="journal article" date="2010" name="J. Mol. Biol.">
        <title>Crystal structure of Escherichia coli enterobactin-specific isochorismate synthase (EntC) bound to its reaction product isochorismate: implications for the enzyme mechanism and differential activity of chorismate-utilizing enzymes.</title>
        <authorList>
            <person name="Sridharan S."/>
            <person name="Howard N."/>
            <person name="Kerbarh O."/>
            <person name="Blaszczyk M."/>
            <person name="Abell C."/>
            <person name="Blundell T.L."/>
        </authorList>
    </citation>
    <scope>X-RAY CRYSTALLOGRAPHY (2.30 ANGSTROMS) IN COMPLEX WITH ISOCHORISMATE AND MAGNESIUM ION</scope>
    <scope>FUNCTION</scope>
    <scope>CATALYTIC ACTIVITY</scope>
    <scope>BIOPHYSICOCHEMICAL PROPERTIES</scope>
    <scope>MUTAGENESIS OF ALA-303; PHE-327; ILE-346 AND PHE-359</scope>
    <scope>COFACTOR</scope>
    <scope>SUBUNIT</scope>
    <scope>ACTIVE SITE</scope>
</reference>
<proteinExistence type="evidence at protein level"/>
<keyword id="KW-0002">3D-structure</keyword>
<keyword id="KW-0903">Direct protein sequencing</keyword>
<keyword id="KW-0259">Enterobactin biosynthesis</keyword>
<keyword id="KW-0413">Isomerase</keyword>
<keyword id="KW-0460">Magnesium</keyword>
<keyword id="KW-0479">Metal-binding</keyword>
<keyword id="KW-1185">Reference proteome</keyword>
<protein>
    <recommendedName>
        <fullName evidence="11">Isochorismate synthase EntC</fullName>
        <ecNumber evidence="1 2 3">5.4.4.2</ecNumber>
    </recommendedName>
    <alternativeName>
        <fullName evidence="12">Isochorismate mutase</fullName>
    </alternativeName>
</protein>
<dbReference type="EC" id="5.4.4.2" evidence="1 2 3"/>
<dbReference type="EMBL" id="M36700">
    <property type="protein sequence ID" value="AAA18491.1"/>
    <property type="molecule type" value="Genomic_DNA"/>
</dbReference>
<dbReference type="EMBL" id="M24142">
    <property type="protein sequence ID" value="AAA16100.1"/>
    <property type="molecule type" value="Unassigned_DNA"/>
</dbReference>
<dbReference type="EMBL" id="U82598">
    <property type="protein sequence ID" value="AAB40793.1"/>
    <property type="status" value="ALT_INIT"/>
    <property type="molecule type" value="Genomic_DNA"/>
</dbReference>
<dbReference type="EMBL" id="U00096">
    <property type="protein sequence ID" value="AAC73694.1"/>
    <property type="molecule type" value="Genomic_DNA"/>
</dbReference>
<dbReference type="EMBL" id="AP009048">
    <property type="protein sequence ID" value="BAE76348.1"/>
    <property type="molecule type" value="Genomic_DNA"/>
</dbReference>
<dbReference type="EMBL" id="X53274">
    <property type="protein sequence ID" value="CAA37371.1"/>
    <property type="molecule type" value="Genomic_DNA"/>
</dbReference>
<dbReference type="PIR" id="JT0497">
    <property type="entry name" value="SYECIK"/>
</dbReference>
<dbReference type="RefSeq" id="NP_415125.1">
    <property type="nucleotide sequence ID" value="NC_000913.3"/>
</dbReference>
<dbReference type="RefSeq" id="WP_000381303.1">
    <property type="nucleotide sequence ID" value="NZ_SSZK01000032.1"/>
</dbReference>
<dbReference type="PDB" id="3HWO">
    <property type="method" value="X-ray"/>
    <property type="resolution" value="2.30 A"/>
    <property type="chains" value="A/B=1-391"/>
</dbReference>
<dbReference type="PDB" id="5JXZ">
    <property type="method" value="X-ray"/>
    <property type="resolution" value="1.88 A"/>
    <property type="chains" value="A/B=1-391"/>
</dbReference>
<dbReference type="PDB" id="5JY4">
    <property type="method" value="X-ray"/>
    <property type="resolution" value="2.11 A"/>
    <property type="chains" value="A/B=1-391"/>
</dbReference>
<dbReference type="PDB" id="5JY8">
    <property type="method" value="X-ray"/>
    <property type="resolution" value="2.94 A"/>
    <property type="chains" value="A/B=1-391"/>
</dbReference>
<dbReference type="PDB" id="5JZD">
    <property type="method" value="X-ray"/>
    <property type="resolution" value="2.30 A"/>
    <property type="chains" value="A/B=1-391"/>
</dbReference>
<dbReference type="PDBsum" id="3HWO"/>
<dbReference type="PDBsum" id="5JXZ"/>
<dbReference type="PDBsum" id="5JY4"/>
<dbReference type="PDBsum" id="5JY8"/>
<dbReference type="PDBsum" id="5JZD"/>
<dbReference type="SMR" id="P0AEJ2"/>
<dbReference type="BioGRID" id="4260986">
    <property type="interactions" value="166"/>
</dbReference>
<dbReference type="DIP" id="DIP-47970N"/>
<dbReference type="FunCoup" id="P0AEJ2">
    <property type="interactions" value="185"/>
</dbReference>
<dbReference type="IntAct" id="P0AEJ2">
    <property type="interactions" value="9"/>
</dbReference>
<dbReference type="STRING" id="511145.b0593"/>
<dbReference type="BindingDB" id="P0AEJ2"/>
<dbReference type="ChEMBL" id="CHEMBL1075176"/>
<dbReference type="PaxDb" id="511145-b0593"/>
<dbReference type="EnsemblBacteria" id="AAC73694">
    <property type="protein sequence ID" value="AAC73694"/>
    <property type="gene ID" value="b0593"/>
</dbReference>
<dbReference type="GeneID" id="945511"/>
<dbReference type="KEGG" id="ecj:JW0585"/>
<dbReference type="KEGG" id="eco:b0593"/>
<dbReference type="KEGG" id="ecoc:C3026_02960"/>
<dbReference type="PATRIC" id="fig|1411691.4.peg.1676"/>
<dbReference type="EchoBASE" id="EB0257"/>
<dbReference type="eggNOG" id="COG1169">
    <property type="taxonomic scope" value="Bacteria"/>
</dbReference>
<dbReference type="HOGENOM" id="CLU_006493_8_6_6"/>
<dbReference type="InParanoid" id="P0AEJ2"/>
<dbReference type="OMA" id="VNLRCMQ"/>
<dbReference type="OrthoDB" id="9806579at2"/>
<dbReference type="PhylomeDB" id="P0AEJ2"/>
<dbReference type="BioCyc" id="EcoCyc:ENTC-MONOMER"/>
<dbReference type="BioCyc" id="MetaCyc:ENTC-MONOMER"/>
<dbReference type="BRENDA" id="5.4.4.2">
    <property type="organism ID" value="2026"/>
</dbReference>
<dbReference type="SABIO-RK" id="P0AEJ2"/>
<dbReference type="UniPathway" id="UPA00017"/>
<dbReference type="EvolutionaryTrace" id="P0AEJ2"/>
<dbReference type="PRO" id="PR:P0AEJ2"/>
<dbReference type="Proteomes" id="UP000000625">
    <property type="component" value="Chromosome"/>
</dbReference>
<dbReference type="GO" id="GO:0008909">
    <property type="term" value="F:isochorismate synthase activity"/>
    <property type="evidence" value="ECO:0000314"/>
    <property type="project" value="EcoCyc"/>
</dbReference>
<dbReference type="GO" id="GO:0000287">
    <property type="term" value="F:magnesium ion binding"/>
    <property type="evidence" value="ECO:0000314"/>
    <property type="project" value="UniProtKB"/>
</dbReference>
<dbReference type="GO" id="GO:0009239">
    <property type="term" value="P:enterobactin biosynthetic process"/>
    <property type="evidence" value="ECO:0000315"/>
    <property type="project" value="EcoCyc"/>
</dbReference>
<dbReference type="FunFam" id="3.60.120.10:FF:000001">
    <property type="entry name" value="Isochorismate synthase EntC"/>
    <property type="match status" value="1"/>
</dbReference>
<dbReference type="Gene3D" id="3.60.120.10">
    <property type="entry name" value="Anthranilate synthase"/>
    <property type="match status" value="1"/>
</dbReference>
<dbReference type="InterPro" id="IPR005801">
    <property type="entry name" value="ADC_synthase"/>
</dbReference>
<dbReference type="InterPro" id="IPR015890">
    <property type="entry name" value="Chorismate_C"/>
</dbReference>
<dbReference type="InterPro" id="IPR004561">
    <property type="entry name" value="IsoChor_synthase"/>
</dbReference>
<dbReference type="NCBIfam" id="TIGR00543">
    <property type="entry name" value="isochor_syn"/>
    <property type="match status" value="1"/>
</dbReference>
<dbReference type="NCBIfam" id="NF011591">
    <property type="entry name" value="PRK15016.1"/>
    <property type="match status" value="1"/>
</dbReference>
<dbReference type="PANTHER" id="PTHR42839">
    <property type="entry name" value="ISOCHORISMATE SYNTHASE ENTC"/>
    <property type="match status" value="1"/>
</dbReference>
<dbReference type="PANTHER" id="PTHR42839:SF2">
    <property type="entry name" value="ISOCHORISMATE SYNTHASE ENTC"/>
    <property type="match status" value="1"/>
</dbReference>
<dbReference type="Pfam" id="PF00425">
    <property type="entry name" value="Chorismate_bind"/>
    <property type="match status" value="1"/>
</dbReference>
<dbReference type="SUPFAM" id="SSF56322">
    <property type="entry name" value="ADC synthase"/>
    <property type="match status" value="1"/>
</dbReference>
<name>ENTC_ECOLI</name>
<gene>
    <name evidence="11" type="primary">entC</name>
    <name type="ordered locus">b0593</name>
    <name type="ordered locus">JW0585</name>
</gene>
<feature type="chain" id="PRO_0000154144" description="Isochorismate synthase EntC">
    <location>
        <begin position="1"/>
        <end position="391"/>
    </location>
</feature>
<feature type="active site" description="Proton acceptor" evidence="10">
    <location>
        <position position="147"/>
    </location>
</feature>
<feature type="active site" description="Proton donor" evidence="10">
    <location>
        <position position="197"/>
    </location>
</feature>
<feature type="binding site" evidence="2 13">
    <location>
        <position position="140"/>
    </location>
    <ligand>
        <name>Mg(2+)</name>
        <dbReference type="ChEBI" id="CHEBI:18420"/>
        <label>1</label>
    </ligand>
</feature>
<feature type="binding site" evidence="2 13">
    <location>
        <position position="142"/>
    </location>
    <ligand>
        <name>Mg(2+)</name>
        <dbReference type="ChEBI" id="CHEBI:18420"/>
        <label>1</label>
    </ligand>
</feature>
<feature type="binding site" evidence="2 13">
    <location>
        <position position="145"/>
    </location>
    <ligand>
        <name>Mg(2+)</name>
        <dbReference type="ChEBI" id="CHEBI:18420"/>
        <label>1</label>
    </ligand>
</feature>
<feature type="binding site" evidence="2 13">
    <location>
        <position position="146"/>
    </location>
    <ligand>
        <name>Mg(2+)</name>
        <dbReference type="ChEBI" id="CHEBI:18420"/>
        <label>1</label>
    </ligand>
</feature>
<feature type="binding site" evidence="2 13">
    <location>
        <position position="214"/>
    </location>
    <ligand>
        <name>isochorismate</name>
        <dbReference type="ChEBI" id="CHEBI:29780"/>
    </ligand>
</feature>
<feature type="binding site" evidence="2 13">
    <location>
        <position position="215"/>
    </location>
    <ligand>
        <name>isochorismate</name>
        <dbReference type="ChEBI" id="CHEBI:29780"/>
    </ligand>
</feature>
<feature type="binding site" evidence="2 13">
    <location>
        <position position="241"/>
    </location>
    <ligand>
        <name>isochorismate</name>
        <dbReference type="ChEBI" id="CHEBI:29780"/>
    </ligand>
</feature>
<feature type="binding site" evidence="2">
    <location>
        <position position="241"/>
    </location>
    <ligand>
        <name>Mg(2+)</name>
        <dbReference type="ChEBI" id="CHEBI:18420"/>
        <label>2</label>
    </ligand>
</feature>
<feature type="binding site" evidence="2 13">
    <location>
        <position position="303"/>
    </location>
    <ligand>
        <name>isochorismate</name>
        <dbReference type="ChEBI" id="CHEBI:29780"/>
    </ligand>
</feature>
<feature type="binding site" evidence="2 13">
    <location>
        <position position="347"/>
    </location>
    <ligand>
        <name>isochorismate</name>
        <dbReference type="ChEBI" id="CHEBI:29780"/>
    </ligand>
</feature>
<feature type="binding site" evidence="2 13">
    <location>
        <position position="361"/>
    </location>
    <ligand>
        <name>isochorismate</name>
        <dbReference type="ChEBI" id="CHEBI:29780"/>
    </ligand>
</feature>
<feature type="binding site" evidence="2">
    <location>
        <position position="376"/>
    </location>
    <ligand>
        <name>Mg(2+)</name>
        <dbReference type="ChEBI" id="CHEBI:18420"/>
        <label>2</label>
    </ligand>
</feature>
<feature type="binding site" evidence="2 13">
    <location>
        <position position="380"/>
    </location>
    <ligand>
        <name>isochorismate</name>
        <dbReference type="ChEBI" id="CHEBI:29780"/>
    </ligand>
</feature>
<feature type="mutagenesis site" description="Loss of mutase activity." evidence="2">
    <original>A</original>
    <variation>T</variation>
    <location>
        <position position="303"/>
    </location>
</feature>
<feature type="mutagenesis site" description="Loss of mutase activity." evidence="2">
    <original>L</original>
    <variation>A</variation>
    <location>
        <position position="304"/>
    </location>
</feature>
<feature type="mutagenesis site" description="Loss of mutase activity." evidence="2">
    <original>F</original>
    <variation>Y</variation>
    <location>
        <position position="327"/>
    </location>
</feature>
<feature type="mutagenesis site" description="Loss of mutase activity." evidence="2">
    <original>I</original>
    <variation>L</variation>
    <location>
        <position position="346"/>
    </location>
</feature>
<feature type="mutagenesis site" description="Loss of mutase activity." evidence="2">
    <original>F</original>
    <variation>Q</variation>
    <location>
        <position position="359"/>
    </location>
</feature>
<feature type="sequence conflict" description="In Ref. 1; AAA18491." evidence="12" ref="1">
    <original>SG</original>
    <variation>TA</variation>
    <location>
        <begin position="305"/>
        <end position="306"/>
    </location>
</feature>
<feature type="strand" evidence="14">
    <location>
        <begin position="22"/>
        <end position="24"/>
    </location>
</feature>
<feature type="strand" evidence="14">
    <location>
        <begin position="30"/>
        <end position="34"/>
    </location>
</feature>
<feature type="strand" evidence="14">
    <location>
        <begin position="36"/>
        <end position="39"/>
    </location>
</feature>
<feature type="turn" evidence="15">
    <location>
        <begin position="44"/>
        <end position="47"/>
    </location>
</feature>
<feature type="helix" evidence="14">
    <location>
        <begin position="52"/>
        <end position="66"/>
    </location>
</feature>
<feature type="strand" evidence="14">
    <location>
        <begin position="73"/>
        <end position="78"/>
    </location>
</feature>
<feature type="strand" evidence="14">
    <location>
        <begin position="87"/>
        <end position="90"/>
    </location>
</feature>
<feature type="strand" evidence="14">
    <location>
        <begin position="92"/>
        <end position="96"/>
    </location>
</feature>
<feature type="helix" evidence="14">
    <location>
        <begin position="99"/>
        <end position="108"/>
    </location>
</feature>
<feature type="strand" evidence="14">
    <location>
        <begin position="117"/>
        <end position="124"/>
    </location>
</feature>
<feature type="helix" evidence="14">
    <location>
        <begin position="126"/>
        <end position="141"/>
    </location>
</feature>
<feature type="strand" evidence="14">
    <location>
        <begin position="142"/>
        <end position="144"/>
    </location>
</feature>
<feature type="strand" evidence="14">
    <location>
        <begin position="146"/>
        <end position="160"/>
    </location>
</feature>
<feature type="helix" evidence="14">
    <location>
        <begin position="164"/>
        <end position="174"/>
    </location>
</feature>
<feature type="strand" evidence="14">
    <location>
        <begin position="176"/>
        <end position="184"/>
    </location>
</feature>
<feature type="strand" evidence="14">
    <location>
        <begin position="186"/>
        <end position="188"/>
    </location>
</feature>
<feature type="strand" evidence="14">
    <location>
        <begin position="190"/>
        <end position="195"/>
    </location>
</feature>
<feature type="strand" evidence="14">
    <location>
        <begin position="198"/>
        <end position="203"/>
    </location>
</feature>
<feature type="strand" evidence="14">
    <location>
        <begin position="206"/>
        <end position="210"/>
    </location>
</feature>
<feature type="strand" evidence="14">
    <location>
        <begin position="212"/>
        <end position="217"/>
    </location>
</feature>
<feature type="turn" evidence="14">
    <location>
        <begin position="222"/>
        <end position="227"/>
    </location>
</feature>
<feature type="helix" evidence="14">
    <location>
        <begin position="228"/>
        <end position="234"/>
    </location>
</feature>
<feature type="helix" evidence="14">
    <location>
        <begin position="236"/>
        <end position="253"/>
    </location>
</feature>
<feature type="turn" evidence="14">
    <location>
        <begin position="254"/>
        <end position="256"/>
    </location>
</feature>
<feature type="strand" evidence="14">
    <location>
        <begin position="257"/>
        <end position="261"/>
    </location>
</feature>
<feature type="strand" evidence="14">
    <location>
        <begin position="267"/>
        <end position="270"/>
    </location>
</feature>
<feature type="strand" evidence="14">
    <location>
        <begin position="272"/>
        <end position="278"/>
    </location>
</feature>
<feature type="strand" evidence="14">
    <location>
        <begin position="281"/>
        <end position="285"/>
    </location>
</feature>
<feature type="helix" evidence="14">
    <location>
        <begin position="291"/>
        <end position="298"/>
    </location>
</feature>
<feature type="turn" evidence="14">
    <location>
        <begin position="302"/>
        <end position="304"/>
    </location>
</feature>
<feature type="strand" evidence="14">
    <location>
        <begin position="305"/>
        <end position="308"/>
    </location>
</feature>
<feature type="helix" evidence="14">
    <location>
        <begin position="309"/>
        <end position="319"/>
    </location>
</feature>
<feature type="turn" evidence="14">
    <location>
        <begin position="325"/>
        <end position="328"/>
    </location>
</feature>
<feature type="strand" evidence="14">
    <location>
        <begin position="329"/>
        <end position="335"/>
    </location>
</feature>
<feature type="strand" evidence="14">
    <location>
        <begin position="340"/>
        <end position="344"/>
    </location>
</feature>
<feature type="strand" evidence="14">
    <location>
        <begin position="347"/>
        <end position="352"/>
    </location>
</feature>
<feature type="strand" evidence="14">
    <location>
        <begin position="355"/>
        <end position="364"/>
    </location>
</feature>
<feature type="helix" evidence="14">
    <location>
        <begin position="370"/>
        <end position="388"/>
    </location>
</feature>
<organism>
    <name type="scientific">Escherichia coli (strain K12)</name>
    <dbReference type="NCBI Taxonomy" id="83333"/>
    <lineage>
        <taxon>Bacteria</taxon>
        <taxon>Pseudomonadati</taxon>
        <taxon>Pseudomonadota</taxon>
        <taxon>Gammaproteobacteria</taxon>
        <taxon>Enterobacterales</taxon>
        <taxon>Enterobacteriaceae</taxon>
        <taxon>Escherichia</taxon>
    </lineage>
</organism>
<sequence length="391" mass="42932">MDTSLAEEVQQTMATLAPNRFFFMSPYRSFTTSGCFARFDEPAVNGDSPDSPFQQKLAALFADAKAQGIKNPVMVGAIPFDPRQPSSLYIPESWQSFSRQEKQASARRFTRSQSLNVVERQAIPEQTTFEQMVARAAALTATPQVDKVVLSRLIDITTDAAIDSGVLLERLIAQNPVSYNFHVPLADGGVLLGASPELLLRKDGERFSSIPLAGSARRQPDEVLDREAGNRLLASEKDRHEHELVTQAMKEVLRERSSELHVPSSPQLITTPTLWHLATPFEGKANSQENALTLACLLHPTPALSGFPHQAATQVIAELEPFDRELFGGIVGWCDSEGNGEWVVTIRCAKLRENQVRLFAGAGIVPASSPLGEWRETGVKLSTMLNVFGLH</sequence>
<comment type="function">
    <text evidence="1 2 3 6 8 9">Involved in the biosynthesis of the siderophore enterobactin (macrocyclic trimeric lactone of N-(2,3-dihydroxybenzoyl)-serine). Catalyzes the reversible conversion of chorismate to isochorismate.</text>
</comment>
<comment type="catalytic activity">
    <reaction evidence="1 2 3">
        <text>chorismate = isochorismate</text>
        <dbReference type="Rhea" id="RHEA:18985"/>
        <dbReference type="ChEBI" id="CHEBI:29748"/>
        <dbReference type="ChEBI" id="CHEBI:29780"/>
        <dbReference type="EC" id="5.4.4.2"/>
    </reaction>
</comment>
<comment type="cofactor">
    <cofactor evidence="2">
        <name>Mg(2+)</name>
        <dbReference type="ChEBI" id="CHEBI:18420"/>
    </cofactor>
    <text evidence="2">Binds 2 Mg(2+) ions per subunit.</text>
</comment>
<comment type="biophysicochemical properties">
    <kinetics>
        <KM evidence="3">5 uM for isochorismate (at pH 7.8 and 37 degrees Celsius)</KM>
        <KM evidence="2">7 uM for chorismate</KM>
        <KM evidence="3">14 uM for chorismate (at pH 7.8 and 37 degrees Celsius)</KM>
        <KM evidence="1">41 uM for chorismate</KM>
        <text evidence="1 2 3">kcat is 290 min(-1) for mutase activity with chorismate. kcat is 173 min(-1) for mutase activity with chorismate (at pH 7.8 and 37 degrees Celsius). kcat is 108 min(-1) for mutase activity with isochorismate (at pH 7.8 and 37 degrees Celsius). kcat is 37 min(-1) for mutase activity with chorismate.</text>
    </kinetics>
</comment>
<comment type="pathway">
    <text evidence="12">Siderophore biosynthesis; enterobactin biosynthesis.</text>
</comment>
<comment type="subunit">
    <text evidence="2 3 7">Monomer. Forms a specific pairwise interaction with EntB; this interaction likely facilitates substrate channeling to connect the EntB and EntC active sites (PubMed:35952947).</text>
</comment>
<comment type="induction">
    <text evidence="5 8">Under conditions of iron deficiency and by the fur protein.</text>
</comment>
<comment type="disruption phenotype">
    <text evidence="4 9">Cells lacking this gene are unable to produce enterobactin and are hypersensitive to the antimicrobial peptide wrwycr.</text>
</comment>
<comment type="similarity">
    <text evidence="12">Belongs to the isochorismate synthase family.</text>
</comment>
<comment type="sequence caution" evidence="12">
    <conflict type="erroneous initiation">
        <sequence resource="EMBL-CDS" id="AAB40793"/>
    </conflict>
    <text>Extended N-terminus.</text>
</comment>
<evidence type="ECO:0000269" key="1">
    <source>
    </source>
</evidence>
<evidence type="ECO:0000269" key="2">
    <source>
    </source>
</evidence>
<evidence type="ECO:0000269" key="3">
    <source>
    </source>
</evidence>
<evidence type="ECO:0000269" key="4">
    <source>
    </source>
</evidence>
<evidence type="ECO:0000269" key="5">
    <source>
    </source>
</evidence>
<evidence type="ECO:0000269" key="6">
    <source>
    </source>
</evidence>
<evidence type="ECO:0000269" key="7">
    <source>
    </source>
</evidence>
<evidence type="ECO:0000269" key="8">
    <source>
    </source>
</evidence>
<evidence type="ECO:0000269" key="9">
    <source>
    </source>
</evidence>
<evidence type="ECO:0000303" key="10">
    <source>
    </source>
</evidence>
<evidence type="ECO:0000303" key="11">
    <source>
    </source>
</evidence>
<evidence type="ECO:0000305" key="12"/>
<evidence type="ECO:0007744" key="13">
    <source>
        <dbReference type="PDB" id="3HWO"/>
    </source>
</evidence>
<evidence type="ECO:0007829" key="14">
    <source>
        <dbReference type="PDB" id="3HWO"/>
    </source>
</evidence>
<evidence type="ECO:0007829" key="15">
    <source>
        <dbReference type="PDB" id="5JZD"/>
    </source>
</evidence>
<accession>P0AEJ2</accession>
<accession>P10377</accession>
<accession>P77099</accession>
<accession>Q2MBK8</accession>